<keyword id="KW-0067">ATP-binding</keyword>
<keyword id="KW-0418">Kinase</keyword>
<keyword id="KW-0460">Magnesium</keyword>
<keyword id="KW-0479">Metal-binding</keyword>
<keyword id="KW-0545">Nucleotide biosynthesis</keyword>
<keyword id="KW-0547">Nucleotide-binding</keyword>
<keyword id="KW-0808">Transferase</keyword>
<feature type="chain" id="PRO_0000141085" description="Ribose-phosphate pyrophosphokinase 1">
    <location>
        <begin position="1"/>
        <end position="321"/>
    </location>
</feature>
<feature type="binding site" evidence="1">
    <location>
        <position position="131"/>
    </location>
    <ligand>
        <name>Mg(2+)</name>
        <dbReference type="ChEBI" id="CHEBI:18420"/>
    </ligand>
</feature>
<feature type="binding site" evidence="1">
    <location>
        <position position="133"/>
    </location>
    <ligand>
        <name>Mg(2+)</name>
        <dbReference type="ChEBI" id="CHEBI:18420"/>
    </ligand>
</feature>
<feature type="binding site" evidence="1">
    <location>
        <position position="142"/>
    </location>
    <ligand>
        <name>Mg(2+)</name>
        <dbReference type="ChEBI" id="CHEBI:18420"/>
    </ligand>
</feature>
<feature type="binding site" evidence="1">
    <location>
        <position position="146"/>
    </location>
    <ligand>
        <name>Mg(2+)</name>
        <dbReference type="ChEBI" id="CHEBI:18420"/>
    </ligand>
</feature>
<accession>P46585</accession>
<comment type="catalytic activity">
    <reaction>
        <text>D-ribose 5-phosphate + ATP = 5-phospho-alpha-D-ribose 1-diphosphate + AMP + H(+)</text>
        <dbReference type="Rhea" id="RHEA:15609"/>
        <dbReference type="ChEBI" id="CHEBI:15378"/>
        <dbReference type="ChEBI" id="CHEBI:30616"/>
        <dbReference type="ChEBI" id="CHEBI:58017"/>
        <dbReference type="ChEBI" id="CHEBI:78346"/>
        <dbReference type="ChEBI" id="CHEBI:456215"/>
        <dbReference type="EC" id="2.7.6.1"/>
    </reaction>
</comment>
<comment type="similarity">
    <text evidence="2">Belongs to the ribose-phosphate pyrophosphokinase family.</text>
</comment>
<protein>
    <recommendedName>
        <fullName>Ribose-phosphate pyrophosphokinase 1</fullName>
        <ecNumber>2.7.6.1</ecNumber>
    </recommendedName>
    <alternativeName>
        <fullName>Phosphoribosyl pyrophosphate synthase 1</fullName>
    </alternativeName>
</protein>
<gene>
    <name type="primary">PRS1</name>
</gene>
<proteinExistence type="inferred from homology"/>
<reference key="1">
    <citation type="journal article" date="1995" name="Yeast">
        <title>Isolation of phosphoribosylpyrophosphate synthetase (PRS1) gene from Candida albicans.</title>
        <authorList>
            <person name="Payne T.L."/>
            <person name="Calderone R.A."/>
        </authorList>
    </citation>
    <scope>NUCLEOTIDE SEQUENCE [GENOMIC DNA]</scope>
    <source>
        <strain>4918</strain>
    </source>
</reference>
<evidence type="ECO:0000255" key="1"/>
<evidence type="ECO:0000305" key="2"/>
<name>KPR1_CANAX</name>
<sequence>MSTNSIKLLASDVHRGLAELVSKRLGLRLTPSELKRESTGEVQFSIGESVRDEDIFIICQIGSGEVNDRVFELMIMINACKTASARRITVILPNFPYARQDRKDKSRAPITAKLMADMLTTAGCDHVITMDLHASQIQGFFDVPVDNLYAEPSVVRYIKETIDYSEAIIISSDAGGAKRAAGLADRLDLNFELIHKERARANEVSRMVLVVDVTDKICVIVDDMADTCGTLAKAAEVLLDNNAKDVIAIVTHGILSGNAIKNINNSKLKKVVCTNTVPFEDKLKLCLKLDTIDISAVIAESIRRLHNGESISYLFKNAPCK</sequence>
<dbReference type="EC" id="2.7.6.1"/>
<dbReference type="EMBL" id="U23934">
    <property type="protein sequence ID" value="AAA97558.1"/>
    <property type="molecule type" value="Genomic_DNA"/>
</dbReference>
<dbReference type="PIR" id="S60393">
    <property type="entry name" value="S60393"/>
</dbReference>
<dbReference type="SMR" id="P46585"/>
<dbReference type="VEuPathDB" id="FungiDB:C2_02510W_A"/>
<dbReference type="VEuPathDB" id="FungiDB:CAWG_04019"/>
<dbReference type="GO" id="GO:0005737">
    <property type="term" value="C:cytoplasm"/>
    <property type="evidence" value="ECO:0007669"/>
    <property type="project" value="TreeGrafter"/>
</dbReference>
<dbReference type="GO" id="GO:0002189">
    <property type="term" value="C:ribose phosphate diphosphokinase complex"/>
    <property type="evidence" value="ECO:0007669"/>
    <property type="project" value="EnsemblFungi"/>
</dbReference>
<dbReference type="GO" id="GO:0005524">
    <property type="term" value="F:ATP binding"/>
    <property type="evidence" value="ECO:0007669"/>
    <property type="project" value="UniProtKB-KW"/>
</dbReference>
<dbReference type="GO" id="GO:0016301">
    <property type="term" value="F:kinase activity"/>
    <property type="evidence" value="ECO:0007669"/>
    <property type="project" value="UniProtKB-KW"/>
</dbReference>
<dbReference type="GO" id="GO:0000287">
    <property type="term" value="F:magnesium ion binding"/>
    <property type="evidence" value="ECO:0007669"/>
    <property type="project" value="InterPro"/>
</dbReference>
<dbReference type="GO" id="GO:0004749">
    <property type="term" value="F:ribose phosphate diphosphokinase activity"/>
    <property type="evidence" value="ECO:0007669"/>
    <property type="project" value="UniProtKB-EC"/>
</dbReference>
<dbReference type="GO" id="GO:0006015">
    <property type="term" value="P:5-phosphoribose 1-diphosphate biosynthetic process"/>
    <property type="evidence" value="ECO:0007669"/>
    <property type="project" value="EnsemblFungi"/>
</dbReference>
<dbReference type="GO" id="GO:0006164">
    <property type="term" value="P:purine nucleotide biosynthetic process"/>
    <property type="evidence" value="ECO:0007669"/>
    <property type="project" value="TreeGrafter"/>
</dbReference>
<dbReference type="GO" id="GO:0008361">
    <property type="term" value="P:regulation of cell size"/>
    <property type="evidence" value="ECO:0007669"/>
    <property type="project" value="TreeGrafter"/>
</dbReference>
<dbReference type="GO" id="GO:0009156">
    <property type="term" value="P:ribonucleoside monophosphate biosynthetic process"/>
    <property type="evidence" value="ECO:0007669"/>
    <property type="project" value="InterPro"/>
</dbReference>
<dbReference type="CDD" id="cd06223">
    <property type="entry name" value="PRTases_typeI"/>
    <property type="match status" value="1"/>
</dbReference>
<dbReference type="FunFam" id="3.40.50.2020:FF:000005">
    <property type="entry name" value="Ribose-phosphate pyrophosphokinase 1"/>
    <property type="match status" value="1"/>
</dbReference>
<dbReference type="Gene3D" id="3.40.50.2020">
    <property type="match status" value="2"/>
</dbReference>
<dbReference type="InterPro" id="IPR000842">
    <property type="entry name" value="PRib_PP_synth_CS"/>
</dbReference>
<dbReference type="InterPro" id="IPR029099">
    <property type="entry name" value="Pribosyltran_N"/>
</dbReference>
<dbReference type="InterPro" id="IPR000836">
    <property type="entry name" value="PRibTrfase_dom"/>
</dbReference>
<dbReference type="InterPro" id="IPR029057">
    <property type="entry name" value="PRTase-like"/>
</dbReference>
<dbReference type="InterPro" id="IPR005946">
    <property type="entry name" value="Rib-P_diPkinase"/>
</dbReference>
<dbReference type="NCBIfam" id="NF002320">
    <property type="entry name" value="PRK01259.1"/>
    <property type="match status" value="1"/>
</dbReference>
<dbReference type="NCBIfam" id="TIGR01251">
    <property type="entry name" value="ribP_PPkin"/>
    <property type="match status" value="1"/>
</dbReference>
<dbReference type="PANTHER" id="PTHR10210">
    <property type="entry name" value="RIBOSE-PHOSPHATE DIPHOSPHOKINASE FAMILY MEMBER"/>
    <property type="match status" value="1"/>
</dbReference>
<dbReference type="PANTHER" id="PTHR10210:SF48">
    <property type="entry name" value="RIBOSE-PHOSPHATE PYROPHOSPHOKINASE 3"/>
    <property type="match status" value="1"/>
</dbReference>
<dbReference type="Pfam" id="PF14572">
    <property type="entry name" value="Pribosyl_synth"/>
    <property type="match status" value="1"/>
</dbReference>
<dbReference type="Pfam" id="PF13793">
    <property type="entry name" value="Pribosyltran_N"/>
    <property type="match status" value="1"/>
</dbReference>
<dbReference type="SMART" id="SM01400">
    <property type="entry name" value="Pribosyltran_N"/>
    <property type="match status" value="1"/>
</dbReference>
<dbReference type="SUPFAM" id="SSF53271">
    <property type="entry name" value="PRTase-like"/>
    <property type="match status" value="1"/>
</dbReference>
<dbReference type="PROSITE" id="PS00114">
    <property type="entry name" value="PRPP_SYNTHASE"/>
    <property type="match status" value="1"/>
</dbReference>
<organism>
    <name type="scientific">Candida albicans</name>
    <name type="common">Yeast</name>
    <dbReference type="NCBI Taxonomy" id="5476"/>
    <lineage>
        <taxon>Eukaryota</taxon>
        <taxon>Fungi</taxon>
        <taxon>Dikarya</taxon>
        <taxon>Ascomycota</taxon>
        <taxon>Saccharomycotina</taxon>
        <taxon>Pichiomycetes</taxon>
        <taxon>Debaryomycetaceae</taxon>
        <taxon>Candida/Lodderomyces clade</taxon>
        <taxon>Candida</taxon>
    </lineage>
</organism>